<organism>
    <name type="scientific">Alkaliphilus metalliredigens (strain QYMF)</name>
    <dbReference type="NCBI Taxonomy" id="293826"/>
    <lineage>
        <taxon>Bacteria</taxon>
        <taxon>Bacillati</taxon>
        <taxon>Bacillota</taxon>
        <taxon>Clostridia</taxon>
        <taxon>Peptostreptococcales</taxon>
        <taxon>Natronincolaceae</taxon>
        <taxon>Alkaliphilus</taxon>
    </lineage>
</organism>
<gene>
    <name evidence="1" type="primary">leuS</name>
    <name type="ordered locus">Amet_2314</name>
</gene>
<dbReference type="EC" id="6.1.1.4" evidence="1"/>
<dbReference type="EMBL" id="CP000724">
    <property type="protein sequence ID" value="ABR48471.1"/>
    <property type="molecule type" value="Genomic_DNA"/>
</dbReference>
<dbReference type="RefSeq" id="WP_012063446.1">
    <property type="nucleotide sequence ID" value="NC_009633.1"/>
</dbReference>
<dbReference type="SMR" id="A6TQK3"/>
<dbReference type="STRING" id="293826.Amet_2314"/>
<dbReference type="KEGG" id="amt:Amet_2314"/>
<dbReference type="eggNOG" id="COG0495">
    <property type="taxonomic scope" value="Bacteria"/>
</dbReference>
<dbReference type="HOGENOM" id="CLU_004427_0_0_9"/>
<dbReference type="OrthoDB" id="9810365at2"/>
<dbReference type="Proteomes" id="UP000001572">
    <property type="component" value="Chromosome"/>
</dbReference>
<dbReference type="GO" id="GO:0005829">
    <property type="term" value="C:cytosol"/>
    <property type="evidence" value="ECO:0007669"/>
    <property type="project" value="TreeGrafter"/>
</dbReference>
<dbReference type="GO" id="GO:0002161">
    <property type="term" value="F:aminoacyl-tRNA deacylase activity"/>
    <property type="evidence" value="ECO:0007669"/>
    <property type="project" value="InterPro"/>
</dbReference>
<dbReference type="GO" id="GO:0005524">
    <property type="term" value="F:ATP binding"/>
    <property type="evidence" value="ECO:0007669"/>
    <property type="project" value="UniProtKB-UniRule"/>
</dbReference>
<dbReference type="GO" id="GO:0004823">
    <property type="term" value="F:leucine-tRNA ligase activity"/>
    <property type="evidence" value="ECO:0007669"/>
    <property type="project" value="UniProtKB-UniRule"/>
</dbReference>
<dbReference type="GO" id="GO:0006429">
    <property type="term" value="P:leucyl-tRNA aminoacylation"/>
    <property type="evidence" value="ECO:0007669"/>
    <property type="project" value="UniProtKB-UniRule"/>
</dbReference>
<dbReference type="CDD" id="cd07958">
    <property type="entry name" value="Anticodon_Ia_Leu_BEm"/>
    <property type="match status" value="1"/>
</dbReference>
<dbReference type="CDD" id="cd00812">
    <property type="entry name" value="LeuRS_core"/>
    <property type="match status" value="1"/>
</dbReference>
<dbReference type="FunFam" id="3.40.50.620:FF:000003">
    <property type="entry name" value="Leucine--tRNA ligase"/>
    <property type="match status" value="1"/>
</dbReference>
<dbReference type="FunFam" id="1.10.730.10:FF:000011">
    <property type="entry name" value="Leucine--tRNA ligase chloroplastic/mitochondrial"/>
    <property type="match status" value="1"/>
</dbReference>
<dbReference type="FunFam" id="3.40.50.620:FF:000100">
    <property type="entry name" value="probable leucine--tRNA ligase, mitochondrial"/>
    <property type="match status" value="1"/>
</dbReference>
<dbReference type="Gene3D" id="3.10.20.590">
    <property type="match status" value="1"/>
</dbReference>
<dbReference type="Gene3D" id="3.40.50.620">
    <property type="entry name" value="HUPs"/>
    <property type="match status" value="2"/>
</dbReference>
<dbReference type="Gene3D" id="1.10.730.10">
    <property type="entry name" value="Isoleucyl-tRNA Synthetase, Domain 1"/>
    <property type="match status" value="1"/>
</dbReference>
<dbReference type="HAMAP" id="MF_00049_B">
    <property type="entry name" value="Leu_tRNA_synth_B"/>
    <property type="match status" value="1"/>
</dbReference>
<dbReference type="InterPro" id="IPR001412">
    <property type="entry name" value="aa-tRNA-synth_I_CS"/>
</dbReference>
<dbReference type="InterPro" id="IPR002300">
    <property type="entry name" value="aa-tRNA-synth_Ia"/>
</dbReference>
<dbReference type="InterPro" id="IPR002302">
    <property type="entry name" value="Leu-tRNA-ligase"/>
</dbReference>
<dbReference type="InterPro" id="IPR025709">
    <property type="entry name" value="Leu_tRNA-synth_edit"/>
</dbReference>
<dbReference type="InterPro" id="IPR013155">
    <property type="entry name" value="M/V/L/I-tRNA-synth_anticd-bd"/>
</dbReference>
<dbReference type="InterPro" id="IPR015413">
    <property type="entry name" value="Methionyl/Leucyl_tRNA_Synth"/>
</dbReference>
<dbReference type="InterPro" id="IPR014729">
    <property type="entry name" value="Rossmann-like_a/b/a_fold"/>
</dbReference>
<dbReference type="InterPro" id="IPR009080">
    <property type="entry name" value="tRNAsynth_Ia_anticodon-bd"/>
</dbReference>
<dbReference type="InterPro" id="IPR009008">
    <property type="entry name" value="Val/Leu/Ile-tRNA-synth_edit"/>
</dbReference>
<dbReference type="NCBIfam" id="TIGR00396">
    <property type="entry name" value="leuS_bact"/>
    <property type="match status" value="1"/>
</dbReference>
<dbReference type="PANTHER" id="PTHR43740:SF2">
    <property type="entry name" value="LEUCINE--TRNA LIGASE, MITOCHONDRIAL"/>
    <property type="match status" value="1"/>
</dbReference>
<dbReference type="PANTHER" id="PTHR43740">
    <property type="entry name" value="LEUCYL-TRNA SYNTHETASE"/>
    <property type="match status" value="1"/>
</dbReference>
<dbReference type="Pfam" id="PF08264">
    <property type="entry name" value="Anticodon_1"/>
    <property type="match status" value="1"/>
</dbReference>
<dbReference type="Pfam" id="PF00133">
    <property type="entry name" value="tRNA-synt_1"/>
    <property type="match status" value="1"/>
</dbReference>
<dbReference type="Pfam" id="PF13603">
    <property type="entry name" value="tRNA-synt_1_2"/>
    <property type="match status" value="1"/>
</dbReference>
<dbReference type="Pfam" id="PF09334">
    <property type="entry name" value="tRNA-synt_1g"/>
    <property type="match status" value="1"/>
</dbReference>
<dbReference type="PRINTS" id="PR00985">
    <property type="entry name" value="TRNASYNTHLEU"/>
</dbReference>
<dbReference type="SUPFAM" id="SSF47323">
    <property type="entry name" value="Anticodon-binding domain of a subclass of class I aminoacyl-tRNA synthetases"/>
    <property type="match status" value="1"/>
</dbReference>
<dbReference type="SUPFAM" id="SSF52374">
    <property type="entry name" value="Nucleotidylyl transferase"/>
    <property type="match status" value="1"/>
</dbReference>
<dbReference type="SUPFAM" id="SSF50677">
    <property type="entry name" value="ValRS/IleRS/LeuRS editing domain"/>
    <property type="match status" value="1"/>
</dbReference>
<dbReference type="PROSITE" id="PS00178">
    <property type="entry name" value="AA_TRNA_LIGASE_I"/>
    <property type="match status" value="1"/>
</dbReference>
<proteinExistence type="inferred from homology"/>
<reference key="1">
    <citation type="journal article" date="2016" name="Genome Announc.">
        <title>Complete genome sequence of Alkaliphilus metalliredigens strain QYMF, an alkaliphilic and metal-reducing bacterium isolated from borax-contaminated leachate ponds.</title>
        <authorList>
            <person name="Hwang C."/>
            <person name="Copeland A."/>
            <person name="Lucas S."/>
            <person name="Lapidus A."/>
            <person name="Barry K."/>
            <person name="Detter J.C."/>
            <person name="Glavina Del Rio T."/>
            <person name="Hammon N."/>
            <person name="Israni S."/>
            <person name="Dalin E."/>
            <person name="Tice H."/>
            <person name="Pitluck S."/>
            <person name="Chertkov O."/>
            <person name="Brettin T."/>
            <person name="Bruce D."/>
            <person name="Han C."/>
            <person name="Schmutz J."/>
            <person name="Larimer F."/>
            <person name="Land M.L."/>
            <person name="Hauser L."/>
            <person name="Kyrpides N."/>
            <person name="Mikhailova N."/>
            <person name="Ye Q."/>
            <person name="Zhou J."/>
            <person name="Richardson P."/>
            <person name="Fields M.W."/>
        </authorList>
    </citation>
    <scope>NUCLEOTIDE SEQUENCE [LARGE SCALE GENOMIC DNA]</scope>
    <source>
        <strain>QYMF</strain>
    </source>
</reference>
<comment type="catalytic activity">
    <reaction evidence="1">
        <text>tRNA(Leu) + L-leucine + ATP = L-leucyl-tRNA(Leu) + AMP + diphosphate</text>
        <dbReference type="Rhea" id="RHEA:11688"/>
        <dbReference type="Rhea" id="RHEA-COMP:9613"/>
        <dbReference type="Rhea" id="RHEA-COMP:9622"/>
        <dbReference type="ChEBI" id="CHEBI:30616"/>
        <dbReference type="ChEBI" id="CHEBI:33019"/>
        <dbReference type="ChEBI" id="CHEBI:57427"/>
        <dbReference type="ChEBI" id="CHEBI:78442"/>
        <dbReference type="ChEBI" id="CHEBI:78494"/>
        <dbReference type="ChEBI" id="CHEBI:456215"/>
        <dbReference type="EC" id="6.1.1.4"/>
    </reaction>
</comment>
<comment type="subcellular location">
    <subcellularLocation>
        <location evidence="1">Cytoplasm</location>
    </subcellularLocation>
</comment>
<comment type="similarity">
    <text evidence="1">Belongs to the class-I aminoacyl-tRNA synthetase family.</text>
</comment>
<name>SYL_ALKMQ</name>
<evidence type="ECO:0000255" key="1">
    <source>
        <dbReference type="HAMAP-Rule" id="MF_00049"/>
    </source>
</evidence>
<keyword id="KW-0030">Aminoacyl-tRNA synthetase</keyword>
<keyword id="KW-0067">ATP-binding</keyword>
<keyword id="KW-0963">Cytoplasm</keyword>
<keyword id="KW-0436">Ligase</keyword>
<keyword id="KW-0547">Nucleotide-binding</keyword>
<keyword id="KW-0648">Protein biosynthesis</keyword>
<keyword id="KW-1185">Reference proteome</keyword>
<feature type="chain" id="PRO_1000091285" description="Leucine--tRNA ligase">
    <location>
        <begin position="1"/>
        <end position="824"/>
    </location>
</feature>
<feature type="short sequence motif" description="'HIGH' region">
    <location>
        <begin position="40"/>
        <end position="50"/>
    </location>
</feature>
<feature type="short sequence motif" description="'KMSKS' region">
    <location>
        <begin position="580"/>
        <end position="584"/>
    </location>
</feature>
<feature type="binding site" evidence="1">
    <location>
        <position position="583"/>
    </location>
    <ligand>
        <name>ATP</name>
        <dbReference type="ChEBI" id="CHEBI:30616"/>
    </ligand>
</feature>
<accession>A6TQK3</accession>
<sequence length="824" mass="95056">MAIYDFGNIEKKWQERWQENKAFSIIERDRPKYYVLEMFPYPSGKIHMGHVRNYSIGDVVARFKRMKGYNVLHPMGWDSFGLPAENAAIKHGIHPDHWTKENVKEMKEQLDALGLSYDWDREVSTCTPEYYKWTQWLFLQFYHKGLAYKKESQVNWCPSCETVLANEQVVNGGCDRCDSSVGKKNLNQWYFKITDYAEALLEDIKLLDGWPEKVKTMQQNWIGKSHGAEIDFPIENTSKELKVFTTRPDTIYGATYMVLAPEHPYVMELVKETEYEEAVVAFRNKLQHMSDIERTSTEIEKEGIFIGKYCINPVSNEKIPIYIANYVLADYGTGAIMAVPAHDQRDLDFARKYDITVTPVIRPIDESDGFDIEKEAYTDSGIMINSEKFNGLDSEKAYEDIAKHIETLNAGKRTINYRLRDWLLSRQRYWGTPIPIIYCDDCGIVPVREEELPVKLPVDVTFSGKGSSPLETSEGFLNTNCPSCGKMAKRETDTMDTFVDSSWYFLRYTDANNEQLPFSKEAANYWVPVDQYIGGVEHAILHLLYSRFFTKVMKDLGLTDQPEPFKKLLTQGMVLKDGAKMSKSKGNVVSPEEIIQKYGADTARLFVLFAAPPERDLEWSDQGVEGSYRFLNRVWRLAEEFIDNNLFMSTSLGEALTKRDKDLKYTIHYTIKKVTSDVEDRFNFNTAISAVMELINELYKYKETDPSKLNGDLFREGIETSILLLAPFAPHFTEELWEKLGKAESVHMTNWPEYDHEAIIKDEVEIVMQVNGKVKDRMMVPTNVSKEELESLAMKNEKIIQIIEGKQIIKIIAVPKKLVNIVIK</sequence>
<protein>
    <recommendedName>
        <fullName evidence="1">Leucine--tRNA ligase</fullName>
        <ecNumber evidence="1">6.1.1.4</ecNumber>
    </recommendedName>
    <alternativeName>
        <fullName evidence="1">Leucyl-tRNA synthetase</fullName>
        <shortName evidence="1">LeuRS</shortName>
    </alternativeName>
</protein>